<sequence>MNQSYGRLVSRAAIAATAMASLLLLIKIFAWWYTGSVSILAALVDSLVDIGASLTNLLVVRYSLQPADDNHSFGHGKAESLAALAQSMFISGSALFLFLTGIQHLVSPTPMTDPGVGVIVTIVALICTIILVSFQRWVVRRTQSQAVRADMLHYQSDVMMNGAILLALGLSWYGWHRADALFALGIGIYILYSALRMGYEAVQSLLDRALPDEERQEIIDIVTSWPGVSGAHDLRTRQSGPTRFIQIHLEMEDSLPLVQAHMVADQVEQAILRRFPGSDVIIHQDPCSVVPREGKRSMLS</sequence>
<feature type="chain" id="PRO_0000206132" description="Cation-efflux pump FieF">
    <location>
        <begin position="1"/>
        <end position="300"/>
    </location>
</feature>
<feature type="transmembrane region" description="Helical" evidence="1">
    <location>
        <begin position="12"/>
        <end position="32"/>
    </location>
</feature>
<feature type="transmembrane region" description="Helical" evidence="1">
    <location>
        <begin position="39"/>
        <end position="59"/>
    </location>
</feature>
<feature type="transmembrane region" description="Helical" evidence="1">
    <location>
        <begin position="82"/>
        <end position="102"/>
    </location>
</feature>
<feature type="transmembrane region" description="Helical" evidence="1">
    <location>
        <begin position="114"/>
        <end position="134"/>
    </location>
</feature>
<feature type="transmembrane region" description="Helical" evidence="1">
    <location>
        <begin position="156"/>
        <end position="176"/>
    </location>
</feature>
<feature type="transmembrane region" description="Helical" evidence="1">
    <location>
        <begin position="178"/>
        <end position="198"/>
    </location>
</feature>
<feature type="binding site" evidence="1">
    <location>
        <position position="45"/>
    </location>
    <ligand>
        <name>Zn(2+)</name>
        <dbReference type="ChEBI" id="CHEBI:29105"/>
    </ligand>
</feature>
<feature type="binding site" evidence="1">
    <location>
        <position position="49"/>
    </location>
    <ligand>
        <name>Zn(2+)</name>
        <dbReference type="ChEBI" id="CHEBI:29105"/>
    </ligand>
</feature>
<feature type="binding site" evidence="1">
    <location>
        <position position="153"/>
    </location>
    <ligand>
        <name>Zn(2+)</name>
        <dbReference type="ChEBI" id="CHEBI:29105"/>
    </ligand>
</feature>
<feature type="binding site" evidence="1">
    <location>
        <position position="157"/>
    </location>
    <ligand>
        <name>Zn(2+)</name>
        <dbReference type="ChEBI" id="CHEBI:29105"/>
    </ligand>
</feature>
<accession>Q83PD6</accession>
<accession>Q7UB82</accession>
<name>FIEF_SHIFL</name>
<comment type="function">
    <text evidence="1">Divalent metal cation transporter which exports Zn(2+), Cd(2+) and possibly Fe(2+). May be involved in zinc and iron detoxification by efflux.</text>
</comment>
<comment type="catalytic activity">
    <reaction evidence="1">
        <text>Zn(2+)(in) + H(+)(out) = Zn(2+)(out) + H(+)(in)</text>
        <dbReference type="Rhea" id="RHEA:28839"/>
        <dbReference type="ChEBI" id="CHEBI:15378"/>
        <dbReference type="ChEBI" id="CHEBI:29105"/>
    </reaction>
</comment>
<comment type="catalytic activity">
    <reaction evidence="1">
        <text>Cd(2+)(in) + H(+)(out) = Cd(2+)(out) + H(+)(in)</text>
        <dbReference type="Rhea" id="RHEA:28739"/>
        <dbReference type="ChEBI" id="CHEBI:15378"/>
        <dbReference type="ChEBI" id="CHEBI:48775"/>
    </reaction>
</comment>
<comment type="catalytic activity">
    <reaction evidence="1">
        <text>Fe(2+)(in) + H(+)(out) = Fe(2+)(out) + H(+)(in)</text>
        <dbReference type="Rhea" id="RHEA:29439"/>
        <dbReference type="ChEBI" id="CHEBI:15378"/>
        <dbReference type="ChEBI" id="CHEBI:29033"/>
    </reaction>
</comment>
<comment type="subunit">
    <text evidence="1">Homodimer.</text>
</comment>
<comment type="subcellular location">
    <subcellularLocation>
        <location evidence="1">Cell inner membrane</location>
        <topology evidence="1">Multi-pass membrane protein</topology>
    </subcellularLocation>
</comment>
<comment type="similarity">
    <text evidence="1 2">Belongs to the cation diffusion facilitator (CDF) transporter (TC 2.A.4) family. FieF subfamily.</text>
</comment>
<protein>
    <recommendedName>
        <fullName evidence="1">Cation-efflux pump FieF</fullName>
    </recommendedName>
</protein>
<reference key="1">
    <citation type="journal article" date="2002" name="Nucleic Acids Res.">
        <title>Genome sequence of Shigella flexneri 2a: insights into pathogenicity through comparison with genomes of Escherichia coli K12 and O157.</title>
        <authorList>
            <person name="Jin Q."/>
            <person name="Yuan Z."/>
            <person name="Xu J."/>
            <person name="Wang Y."/>
            <person name="Shen Y."/>
            <person name="Lu W."/>
            <person name="Wang J."/>
            <person name="Liu H."/>
            <person name="Yang J."/>
            <person name="Yang F."/>
            <person name="Zhang X."/>
            <person name="Zhang J."/>
            <person name="Yang G."/>
            <person name="Wu H."/>
            <person name="Qu D."/>
            <person name="Dong J."/>
            <person name="Sun L."/>
            <person name="Xue Y."/>
            <person name="Zhao A."/>
            <person name="Gao Y."/>
            <person name="Zhu J."/>
            <person name="Kan B."/>
            <person name="Ding K."/>
            <person name="Chen S."/>
            <person name="Cheng H."/>
            <person name="Yao Z."/>
            <person name="He B."/>
            <person name="Chen R."/>
            <person name="Ma D."/>
            <person name="Qiang B."/>
            <person name="Wen Y."/>
            <person name="Hou Y."/>
            <person name="Yu J."/>
        </authorList>
    </citation>
    <scope>NUCLEOTIDE SEQUENCE [LARGE SCALE GENOMIC DNA]</scope>
    <source>
        <strain>301 / Serotype 2a</strain>
    </source>
</reference>
<reference key="2">
    <citation type="journal article" date="2003" name="Infect. Immun.">
        <title>Complete genome sequence and comparative genomics of Shigella flexneri serotype 2a strain 2457T.</title>
        <authorList>
            <person name="Wei J."/>
            <person name="Goldberg M.B."/>
            <person name="Burland V."/>
            <person name="Venkatesan M.M."/>
            <person name="Deng W."/>
            <person name="Fournier G."/>
            <person name="Mayhew G.F."/>
            <person name="Plunkett G. III"/>
            <person name="Rose D.J."/>
            <person name="Darling A."/>
            <person name="Mau B."/>
            <person name="Perna N.T."/>
            <person name="Payne S.M."/>
            <person name="Runyen-Janecky L.J."/>
            <person name="Zhou S."/>
            <person name="Schwartz D.C."/>
            <person name="Blattner F.R."/>
        </authorList>
    </citation>
    <scope>NUCLEOTIDE SEQUENCE [LARGE SCALE GENOMIC DNA]</scope>
    <source>
        <strain>ATCC 700930 / 2457T / Serotype 2a</strain>
    </source>
</reference>
<organism>
    <name type="scientific">Shigella flexneri</name>
    <dbReference type="NCBI Taxonomy" id="623"/>
    <lineage>
        <taxon>Bacteria</taxon>
        <taxon>Pseudomonadati</taxon>
        <taxon>Pseudomonadota</taxon>
        <taxon>Gammaproteobacteria</taxon>
        <taxon>Enterobacterales</taxon>
        <taxon>Enterobacteriaceae</taxon>
        <taxon>Shigella</taxon>
    </lineage>
</organism>
<evidence type="ECO:0000255" key="1">
    <source>
        <dbReference type="HAMAP-Rule" id="MF_01425"/>
    </source>
</evidence>
<evidence type="ECO:0000305" key="2"/>
<gene>
    <name evidence="1" type="primary">fieF</name>
    <name type="ordered locus">SF3993</name>
    <name type="ordered locus">S3754</name>
</gene>
<keyword id="KW-0997">Cell inner membrane</keyword>
<keyword id="KW-1003">Cell membrane</keyword>
<keyword id="KW-0406">Ion transport</keyword>
<keyword id="KW-0408">Iron</keyword>
<keyword id="KW-0410">Iron transport</keyword>
<keyword id="KW-0472">Membrane</keyword>
<keyword id="KW-0479">Metal-binding</keyword>
<keyword id="KW-1185">Reference proteome</keyword>
<keyword id="KW-0812">Transmembrane</keyword>
<keyword id="KW-1133">Transmembrane helix</keyword>
<keyword id="KW-0813">Transport</keyword>
<keyword id="KW-0862">Zinc</keyword>
<keyword id="KW-0864">Zinc transport</keyword>
<dbReference type="EMBL" id="AE005674">
    <property type="protein sequence ID" value="AAN45427.2"/>
    <property type="molecule type" value="Genomic_DNA"/>
</dbReference>
<dbReference type="EMBL" id="AE014073">
    <property type="protein sequence ID" value="AAP18773.1"/>
    <property type="molecule type" value="Genomic_DNA"/>
</dbReference>
<dbReference type="RefSeq" id="NP_709720.2">
    <property type="nucleotide sequence ID" value="NC_004337.2"/>
</dbReference>
<dbReference type="RefSeq" id="WP_001076748.1">
    <property type="nucleotide sequence ID" value="NZ_WPGW01000012.1"/>
</dbReference>
<dbReference type="SMR" id="Q83PD6"/>
<dbReference type="STRING" id="198214.SF3993"/>
<dbReference type="PaxDb" id="198214-SF3993"/>
<dbReference type="GeneID" id="1025401"/>
<dbReference type="GeneID" id="93777983"/>
<dbReference type="KEGG" id="sfl:SF3993"/>
<dbReference type="KEGG" id="sfx:S3754"/>
<dbReference type="PATRIC" id="fig|198214.7.peg.4705"/>
<dbReference type="HOGENOM" id="CLU_013430_3_0_6"/>
<dbReference type="Proteomes" id="UP000001006">
    <property type="component" value="Chromosome"/>
</dbReference>
<dbReference type="Proteomes" id="UP000002673">
    <property type="component" value="Chromosome"/>
</dbReference>
<dbReference type="GO" id="GO:0005886">
    <property type="term" value="C:plasma membrane"/>
    <property type="evidence" value="ECO:0007669"/>
    <property type="project" value="UniProtKB-SubCell"/>
</dbReference>
<dbReference type="GO" id="GO:0015086">
    <property type="term" value="F:cadmium ion transmembrane transporter activity"/>
    <property type="evidence" value="ECO:0007669"/>
    <property type="project" value="UniProtKB-UniRule"/>
</dbReference>
<dbReference type="GO" id="GO:0015093">
    <property type="term" value="F:ferrous iron transmembrane transporter activity"/>
    <property type="evidence" value="ECO:0007669"/>
    <property type="project" value="TreeGrafter"/>
</dbReference>
<dbReference type="GO" id="GO:0046872">
    <property type="term" value="F:metal ion binding"/>
    <property type="evidence" value="ECO:0007669"/>
    <property type="project" value="UniProtKB-KW"/>
</dbReference>
<dbReference type="GO" id="GO:0015341">
    <property type="term" value="F:zinc efflux antiporter activity"/>
    <property type="evidence" value="ECO:0007669"/>
    <property type="project" value="TreeGrafter"/>
</dbReference>
<dbReference type="GO" id="GO:0006882">
    <property type="term" value="P:intracellular zinc ion homeostasis"/>
    <property type="evidence" value="ECO:0007669"/>
    <property type="project" value="TreeGrafter"/>
</dbReference>
<dbReference type="FunFam" id="1.20.1510.10:FF:000001">
    <property type="entry name" value="Ferrous-iron efflux pump FieF"/>
    <property type="match status" value="1"/>
</dbReference>
<dbReference type="FunFam" id="3.30.70.1350:FF:000002">
    <property type="entry name" value="Ferrous-iron efflux pump FieF"/>
    <property type="match status" value="1"/>
</dbReference>
<dbReference type="Gene3D" id="1.20.1510.10">
    <property type="entry name" value="Cation efflux protein transmembrane domain"/>
    <property type="match status" value="1"/>
</dbReference>
<dbReference type="Gene3D" id="3.30.70.1350">
    <property type="entry name" value="Cation efflux protein, cytoplasmic domain"/>
    <property type="match status" value="1"/>
</dbReference>
<dbReference type="HAMAP" id="MF_01425">
    <property type="entry name" value="Cation_efflux_FieF"/>
    <property type="match status" value="1"/>
</dbReference>
<dbReference type="InterPro" id="IPR002524">
    <property type="entry name" value="Cation_efflux"/>
</dbReference>
<dbReference type="InterPro" id="IPR027470">
    <property type="entry name" value="Cation_efflux_CTD"/>
</dbReference>
<dbReference type="InterPro" id="IPR036837">
    <property type="entry name" value="Cation_efflux_CTD_sf"/>
</dbReference>
<dbReference type="InterPro" id="IPR023783">
    <property type="entry name" value="Cation_efflux_FieF"/>
</dbReference>
<dbReference type="InterPro" id="IPR027469">
    <property type="entry name" value="Cation_efflux_TMD_sf"/>
</dbReference>
<dbReference type="InterPro" id="IPR050291">
    <property type="entry name" value="CDF_Transporter"/>
</dbReference>
<dbReference type="NCBIfam" id="TIGR01297">
    <property type="entry name" value="CDF"/>
    <property type="match status" value="1"/>
</dbReference>
<dbReference type="NCBIfam" id="NF007064">
    <property type="entry name" value="PRK09509.1"/>
    <property type="match status" value="1"/>
</dbReference>
<dbReference type="PANTHER" id="PTHR43840:SF41">
    <property type="entry name" value="CATION-EFFLUX PUMP FIEF"/>
    <property type="match status" value="1"/>
</dbReference>
<dbReference type="PANTHER" id="PTHR43840">
    <property type="entry name" value="MITOCHONDRIAL METAL TRANSPORTER 1-RELATED"/>
    <property type="match status" value="1"/>
</dbReference>
<dbReference type="Pfam" id="PF01545">
    <property type="entry name" value="Cation_efflux"/>
    <property type="match status" value="1"/>
</dbReference>
<dbReference type="Pfam" id="PF16916">
    <property type="entry name" value="ZT_dimer"/>
    <property type="match status" value="1"/>
</dbReference>
<dbReference type="SUPFAM" id="SSF160240">
    <property type="entry name" value="Cation efflux protein cytoplasmic domain-like"/>
    <property type="match status" value="1"/>
</dbReference>
<dbReference type="SUPFAM" id="SSF161111">
    <property type="entry name" value="Cation efflux protein transmembrane domain-like"/>
    <property type="match status" value="1"/>
</dbReference>
<proteinExistence type="inferred from homology"/>